<name>XDHD_ECOLI</name>
<organism>
    <name type="scientific">Escherichia coli (strain K12)</name>
    <dbReference type="NCBI Taxonomy" id="83333"/>
    <lineage>
        <taxon>Bacteria</taxon>
        <taxon>Pseudomonadati</taxon>
        <taxon>Pseudomonadota</taxon>
        <taxon>Gammaproteobacteria</taxon>
        <taxon>Enterobacterales</taxon>
        <taxon>Enterobacteriaceae</taxon>
        <taxon>Escherichia</taxon>
    </lineage>
</organism>
<feature type="chain" id="PRO_0000166096" description="Probable hypoxanthine oxidase XdhD">
    <location>
        <begin position="1"/>
        <end position="956"/>
    </location>
</feature>
<feature type="binding site" evidence="2">
    <location>
        <position position="414"/>
    </location>
    <ligand>
        <name>Mo-molybdopterin</name>
        <dbReference type="ChEBI" id="CHEBI:71302"/>
    </ligand>
    <ligandPart>
        <name>Mo</name>
        <dbReference type="ChEBI" id="CHEBI:28685"/>
    </ligandPart>
</feature>
<feature type="binding site" evidence="2">
    <location>
        <position position="445"/>
    </location>
    <ligand>
        <name>Mo-molybdopterin</name>
        <dbReference type="ChEBI" id="CHEBI:71302"/>
    </ligand>
    <ligandPart>
        <name>Mo</name>
        <dbReference type="ChEBI" id="CHEBI:28685"/>
    </ligandPart>
</feature>
<feature type="binding site" evidence="2">
    <location>
        <position position="727"/>
    </location>
    <ligand>
        <name>Mo-molybdopterin</name>
        <dbReference type="ChEBI" id="CHEBI:71302"/>
    </ligand>
    <ligandPart>
        <name>Mo</name>
        <dbReference type="ChEBI" id="CHEBI:28685"/>
    </ligandPart>
</feature>
<evidence type="ECO:0000250" key="1"/>
<evidence type="ECO:0000255" key="2"/>
<evidence type="ECO:0000269" key="3">
    <source>
    </source>
</evidence>
<evidence type="ECO:0000305" key="4"/>
<accession>Q46814</accession>
<accession>Q2M9V9</accession>
<gene>
    <name type="primary">xdhD</name>
    <name type="synonym">ygfN</name>
    <name type="ordered locus">b2881</name>
    <name type="ordered locus">JW2849</name>
</gene>
<keyword id="KW-0001">2Fe-2S</keyword>
<keyword id="KW-0408">Iron</keyword>
<keyword id="KW-0411">Iron-sulfur</keyword>
<keyword id="KW-0479">Metal-binding</keyword>
<keyword id="KW-0500">Molybdenum</keyword>
<keyword id="KW-0560">Oxidoreductase</keyword>
<keyword id="KW-0659">Purine metabolism</keyword>
<keyword id="KW-0660">Purine salvage</keyword>
<keyword id="KW-1185">Reference proteome</keyword>
<proteinExistence type="inferred from homology"/>
<sequence>MIIHFTLNGAPQELTVNPGENVQKLLFNMGMHSVRNSDDGFGFAGSDAIIFNGNIVNASLLIAAQLEKADIRTAESLGKWNELSLVQQAMVDVGVVQSGYNDPAAALIITDLLDRIAAPTREEIDDALSGLFSRDAGWQQYYQVIELAVARKNNPQATIDIAPTFRDDLEVIGKHYPKTDAAKMVQAKPCYVEDRVTADACVIKMLRSPHAHALITHLDVSKAEALPGVVHVITHLNCPDIYYTPGGQSAPEPSPLDRRMFGKKMRHVGDRVAAVVAESEEIALEALKLIDVEYEVLKPVMSIDEAMAEDAPVVHDEPVVYVAGAPDTLEDDNSHAAQRGEHMIINFPIGSRPRKNIAASIHGHIGDMDKGFADADVIIERTYNSTQAQQCPTETHICFTRMDGDRLVIHASTQVPWHLRRQVARLVGMKQHKVHVIKERVGGGFGSKQDILLEEVCAWATCVTGRPVLFRYTREEEFIANTSRHVAKVTVKLGAKKDGRLTAVKMDFRANTGPYGNHSLTVPCNGPALSLPLYPCDNVDFQVTTYYSNICPNGAYQGYGAPKGNFAITMALAELAEQLQIDQLEIIERNRVHEGQELKILGAIGEGKAPTSVPSAASCALEEILRQGREMIQWSSPKPQNGDWHIGRGVAIIMQKSGIPDIDQANCMIKLESDGTFIVHSGGADIGTGLDTVVTKLAAEVLHCPPQDVHVISGDTDHALFDKGAYASSGTCFSGNAARLAAENLREKILFHGAQMLGEPVADVQLATPGVVRGKKGEVSFGDIAHKGETGTGFGSLVGTGSYITPDFAFPYGANFAEVAVNTRTGEIRLDKFYALLDCGTPVNPELALGQIYGATLRAIGHSMSEEIIYDAEGHPLTRDLRSYGAPKIGDIPRDFRAVLVPSDDKVGPFGAKSISEIGVNGAAPAIATAIHDACGIWLREWHFTPEKILTALEKI</sequence>
<reference key="1">
    <citation type="journal article" date="1997" name="Science">
        <title>The complete genome sequence of Escherichia coli K-12.</title>
        <authorList>
            <person name="Blattner F.R."/>
            <person name="Plunkett G. III"/>
            <person name="Bloch C.A."/>
            <person name="Perna N.T."/>
            <person name="Burland V."/>
            <person name="Riley M."/>
            <person name="Collado-Vides J."/>
            <person name="Glasner J.D."/>
            <person name="Rode C.K."/>
            <person name="Mayhew G.F."/>
            <person name="Gregor J."/>
            <person name="Davis N.W."/>
            <person name="Kirkpatrick H.A."/>
            <person name="Goeden M.A."/>
            <person name="Rose D.J."/>
            <person name="Mau B."/>
            <person name="Shao Y."/>
        </authorList>
    </citation>
    <scope>NUCLEOTIDE SEQUENCE [LARGE SCALE GENOMIC DNA]</scope>
    <source>
        <strain>K12 / MG1655 / ATCC 47076</strain>
    </source>
</reference>
<reference key="2">
    <citation type="journal article" date="2006" name="Mol. Syst. Biol.">
        <title>Highly accurate genome sequences of Escherichia coli K-12 strains MG1655 and W3110.</title>
        <authorList>
            <person name="Hayashi K."/>
            <person name="Morooka N."/>
            <person name="Yamamoto Y."/>
            <person name="Fujita K."/>
            <person name="Isono K."/>
            <person name="Choi S."/>
            <person name="Ohtsubo E."/>
            <person name="Baba T."/>
            <person name="Wanner B.L."/>
            <person name="Mori H."/>
            <person name="Horiuchi T."/>
        </authorList>
    </citation>
    <scope>NUCLEOTIDE SEQUENCE [LARGE SCALE GENOMIC DNA]</scope>
    <source>
        <strain>K12 / W3110 / ATCC 27325 / DSM 5911</strain>
    </source>
</reference>
<reference key="3">
    <citation type="journal article" date="2000" name="J. Bacteriol.">
        <title>Purine catabolism in Escherichia coli and function of xanthine dehydrogenase in purine salvage.</title>
        <authorList>
            <person name="Xi H."/>
            <person name="Schneider B.L."/>
            <person name="Reitzer L."/>
        </authorList>
    </citation>
    <scope>FUNCTION</scope>
    <source>
        <strain>K12 / W3110 / ATCC 27325 / DSM 5911</strain>
    </source>
</reference>
<dbReference type="EC" id="1.-.-.-"/>
<dbReference type="EMBL" id="U28375">
    <property type="protein sequence ID" value="AAA83062.1"/>
    <property type="molecule type" value="Genomic_DNA"/>
</dbReference>
<dbReference type="EMBL" id="U00096">
    <property type="protein sequence ID" value="AAC75919.1"/>
    <property type="molecule type" value="Genomic_DNA"/>
</dbReference>
<dbReference type="EMBL" id="AP009048">
    <property type="protein sequence ID" value="BAE76947.1"/>
    <property type="molecule type" value="Genomic_DNA"/>
</dbReference>
<dbReference type="PIR" id="A65072">
    <property type="entry name" value="A65072"/>
</dbReference>
<dbReference type="RefSeq" id="NP_417357.1">
    <property type="nucleotide sequence ID" value="NC_000913.3"/>
</dbReference>
<dbReference type="RefSeq" id="WP_000583615.1">
    <property type="nucleotide sequence ID" value="NZ_LN832404.1"/>
</dbReference>
<dbReference type="SMR" id="Q46814"/>
<dbReference type="BioGRID" id="4262328">
    <property type="interactions" value="19"/>
</dbReference>
<dbReference type="DIP" id="DIP-28056N"/>
<dbReference type="FunCoup" id="Q46814">
    <property type="interactions" value="287"/>
</dbReference>
<dbReference type="IntAct" id="Q46814">
    <property type="interactions" value="3"/>
</dbReference>
<dbReference type="STRING" id="511145.b2881"/>
<dbReference type="jPOST" id="Q46814"/>
<dbReference type="PaxDb" id="511145-b2881"/>
<dbReference type="EnsemblBacteria" id="AAC75919">
    <property type="protein sequence ID" value="AAC75919"/>
    <property type="gene ID" value="b2881"/>
</dbReference>
<dbReference type="GeneID" id="949079"/>
<dbReference type="KEGG" id="ecj:JW2849"/>
<dbReference type="KEGG" id="eco:b2881"/>
<dbReference type="KEGG" id="ecoc:C3026_15800"/>
<dbReference type="PATRIC" id="fig|1411691.4.peg.3853"/>
<dbReference type="EchoBASE" id="EB2876"/>
<dbReference type="eggNOG" id="COG1529">
    <property type="taxonomic scope" value="Bacteria"/>
</dbReference>
<dbReference type="eggNOG" id="COG2080">
    <property type="taxonomic scope" value="Bacteria"/>
</dbReference>
<dbReference type="HOGENOM" id="CLU_001681_2_3_6"/>
<dbReference type="InParanoid" id="Q46814"/>
<dbReference type="OMA" id="THYYQTV"/>
<dbReference type="OrthoDB" id="9767994at2"/>
<dbReference type="PhylomeDB" id="Q46814"/>
<dbReference type="BioCyc" id="EcoCyc:G7500-MONOMER"/>
<dbReference type="BioCyc" id="MetaCyc:G7500-MONOMER"/>
<dbReference type="PRO" id="PR:Q46814"/>
<dbReference type="Proteomes" id="UP000000625">
    <property type="component" value="Chromosome"/>
</dbReference>
<dbReference type="GO" id="GO:0051537">
    <property type="term" value="F:2 iron, 2 sulfur cluster binding"/>
    <property type="evidence" value="ECO:0007669"/>
    <property type="project" value="UniProtKB-KW"/>
</dbReference>
<dbReference type="GO" id="GO:0005506">
    <property type="term" value="F:iron ion binding"/>
    <property type="evidence" value="ECO:0000314"/>
    <property type="project" value="EcoCyc"/>
</dbReference>
<dbReference type="GO" id="GO:0016491">
    <property type="term" value="F:oxidoreductase activity"/>
    <property type="evidence" value="ECO:0000318"/>
    <property type="project" value="GO_Central"/>
</dbReference>
<dbReference type="GO" id="GO:0006144">
    <property type="term" value="P:purine nucleobase metabolic process"/>
    <property type="evidence" value="ECO:0007669"/>
    <property type="project" value="UniProtKB-KW"/>
</dbReference>
<dbReference type="GO" id="GO:0006166">
    <property type="term" value="P:purine ribonucleoside salvage"/>
    <property type="evidence" value="ECO:0007669"/>
    <property type="project" value="UniProtKB-KW"/>
</dbReference>
<dbReference type="FunFam" id="3.90.1170.50:FF:000004">
    <property type="entry name" value="Selenate reductase subunit YgfN"/>
    <property type="match status" value="1"/>
</dbReference>
<dbReference type="Gene3D" id="1.10.150.120">
    <property type="entry name" value="[2Fe-2S]-binding domain"/>
    <property type="match status" value="1"/>
</dbReference>
<dbReference type="Gene3D" id="3.90.1170.50">
    <property type="entry name" value="Aldehyde oxidase/xanthine dehydrogenase, a/b hammerhead"/>
    <property type="match status" value="1"/>
</dbReference>
<dbReference type="Gene3D" id="3.30.365.10">
    <property type="entry name" value="Aldehyde oxidase/xanthine dehydrogenase, molybdopterin binding domain"/>
    <property type="match status" value="4"/>
</dbReference>
<dbReference type="InterPro" id="IPR002888">
    <property type="entry name" value="2Fe-2S-bd"/>
</dbReference>
<dbReference type="InterPro" id="IPR036884">
    <property type="entry name" value="2Fe-2S-bd_dom_sf"/>
</dbReference>
<dbReference type="InterPro" id="IPR000674">
    <property type="entry name" value="Ald_Oxase/Xan_DH_a/b"/>
</dbReference>
<dbReference type="InterPro" id="IPR036856">
    <property type="entry name" value="Ald_Oxase/Xan_DH_a/b_sf"/>
</dbReference>
<dbReference type="InterPro" id="IPR016208">
    <property type="entry name" value="Ald_Oxase/xanthine_DH-like"/>
</dbReference>
<dbReference type="InterPro" id="IPR008274">
    <property type="entry name" value="AldOxase/xan_DH_MoCoBD1"/>
</dbReference>
<dbReference type="InterPro" id="IPR046867">
    <property type="entry name" value="AldOxase/xan_DH_MoCoBD2"/>
</dbReference>
<dbReference type="InterPro" id="IPR037165">
    <property type="entry name" value="AldOxase/xan_DH_Mopterin-bd_sf"/>
</dbReference>
<dbReference type="InterPro" id="IPR017699">
    <property type="entry name" value="Mo-bd_YgfN/XdhD"/>
</dbReference>
<dbReference type="NCBIfam" id="TIGR03313">
    <property type="entry name" value="Se_sel_red_Mo"/>
    <property type="match status" value="1"/>
</dbReference>
<dbReference type="PANTHER" id="PTHR11908:SF132">
    <property type="entry name" value="ALDEHYDE OXIDASE 1-RELATED"/>
    <property type="match status" value="1"/>
</dbReference>
<dbReference type="PANTHER" id="PTHR11908">
    <property type="entry name" value="XANTHINE DEHYDROGENASE"/>
    <property type="match status" value="1"/>
</dbReference>
<dbReference type="Pfam" id="PF01315">
    <property type="entry name" value="Ald_Xan_dh_C"/>
    <property type="match status" value="1"/>
</dbReference>
<dbReference type="Pfam" id="PF01799">
    <property type="entry name" value="Fer2_2"/>
    <property type="match status" value="1"/>
</dbReference>
<dbReference type="Pfam" id="PF02738">
    <property type="entry name" value="MoCoBD_1"/>
    <property type="match status" value="1"/>
</dbReference>
<dbReference type="Pfam" id="PF20256">
    <property type="entry name" value="MoCoBD_2"/>
    <property type="match status" value="1"/>
</dbReference>
<dbReference type="PIRSF" id="PIRSF000127">
    <property type="entry name" value="Xanthine_DH"/>
    <property type="match status" value="1"/>
</dbReference>
<dbReference type="SMART" id="SM01008">
    <property type="entry name" value="Ald_Xan_dh_C"/>
    <property type="match status" value="1"/>
</dbReference>
<dbReference type="SUPFAM" id="SSF47741">
    <property type="entry name" value="CO dehydrogenase ISP C-domain like"/>
    <property type="match status" value="1"/>
</dbReference>
<dbReference type="SUPFAM" id="SSF54665">
    <property type="entry name" value="CO dehydrogenase molybdoprotein N-domain-like"/>
    <property type="match status" value="1"/>
</dbReference>
<dbReference type="SUPFAM" id="SSF56003">
    <property type="entry name" value="Molybdenum cofactor-binding domain"/>
    <property type="match status" value="1"/>
</dbReference>
<protein>
    <recommendedName>
        <fullName>Probable hypoxanthine oxidase XdhD</fullName>
        <ecNumber>1.-.-.-</ecNumber>
    </recommendedName>
</protein>
<comment type="function">
    <text evidence="3">Probably has no xanthine dehydrogenase activity; however deletion results in increased adenine sensitivity, suggesting that this protein contributes to the conversion of adenine to guanine nucleotides during purine salvage.</text>
</comment>
<comment type="cofactor">
    <cofactor evidence="4">
        <name>[2Fe-2S] cluster</name>
        <dbReference type="ChEBI" id="CHEBI:190135"/>
    </cofactor>
    <text evidence="4">Binds 2 [2Fe-2S] centers.</text>
</comment>
<comment type="cofactor">
    <cofactor evidence="1">
        <name>Mo-molybdopterin</name>
        <dbReference type="ChEBI" id="CHEBI:71302"/>
    </cofactor>
    <text evidence="1">Binds 1 Mo-molybdopterin (Mo-MPT) cofactor per subunit.</text>
</comment>
<comment type="similarity">
    <text evidence="4">Belongs to the xanthine dehydrogenase family.</text>
</comment>